<dbReference type="EC" id="4.3.3.6" evidence="1"/>
<dbReference type="EC" id="3.5.1.2" evidence="1"/>
<dbReference type="EMBL" id="CP001283">
    <property type="protein sequence ID" value="ACK88405.1"/>
    <property type="molecule type" value="Genomic_DNA"/>
</dbReference>
<dbReference type="RefSeq" id="WP_000238799.1">
    <property type="nucleotide sequence ID" value="NC_011773.1"/>
</dbReference>
<dbReference type="SMR" id="B7JJC7"/>
<dbReference type="MEROPS" id="C26.A32"/>
<dbReference type="KEGG" id="bcu:BCAH820_0015"/>
<dbReference type="HOGENOM" id="CLU_069674_2_0_9"/>
<dbReference type="UniPathway" id="UPA00245"/>
<dbReference type="Proteomes" id="UP000001363">
    <property type="component" value="Chromosome"/>
</dbReference>
<dbReference type="GO" id="GO:0005829">
    <property type="term" value="C:cytosol"/>
    <property type="evidence" value="ECO:0007669"/>
    <property type="project" value="TreeGrafter"/>
</dbReference>
<dbReference type="GO" id="GO:1903600">
    <property type="term" value="C:glutaminase complex"/>
    <property type="evidence" value="ECO:0007669"/>
    <property type="project" value="TreeGrafter"/>
</dbReference>
<dbReference type="GO" id="GO:0004359">
    <property type="term" value="F:glutaminase activity"/>
    <property type="evidence" value="ECO:0007669"/>
    <property type="project" value="UniProtKB-UniRule"/>
</dbReference>
<dbReference type="GO" id="GO:0036381">
    <property type="term" value="F:pyridoxal 5'-phosphate synthase (glutamine hydrolysing) activity"/>
    <property type="evidence" value="ECO:0007669"/>
    <property type="project" value="UniProtKB-UniRule"/>
</dbReference>
<dbReference type="GO" id="GO:0006543">
    <property type="term" value="P:glutamine catabolic process"/>
    <property type="evidence" value="ECO:0007669"/>
    <property type="project" value="UniProtKB-UniRule"/>
</dbReference>
<dbReference type="GO" id="GO:0042823">
    <property type="term" value="P:pyridoxal phosphate biosynthetic process"/>
    <property type="evidence" value="ECO:0007669"/>
    <property type="project" value="UniProtKB-UniRule"/>
</dbReference>
<dbReference type="GO" id="GO:0008614">
    <property type="term" value="P:pyridoxine metabolic process"/>
    <property type="evidence" value="ECO:0007669"/>
    <property type="project" value="TreeGrafter"/>
</dbReference>
<dbReference type="CDD" id="cd01749">
    <property type="entry name" value="GATase1_PB"/>
    <property type="match status" value="1"/>
</dbReference>
<dbReference type="FunFam" id="3.40.50.880:FF:000010">
    <property type="entry name" value="uncharacterized protein LOC100176842 isoform X2"/>
    <property type="match status" value="1"/>
</dbReference>
<dbReference type="Gene3D" id="3.40.50.880">
    <property type="match status" value="1"/>
</dbReference>
<dbReference type="HAMAP" id="MF_01615">
    <property type="entry name" value="PdxT"/>
    <property type="match status" value="1"/>
</dbReference>
<dbReference type="InterPro" id="IPR029062">
    <property type="entry name" value="Class_I_gatase-like"/>
</dbReference>
<dbReference type="InterPro" id="IPR002161">
    <property type="entry name" value="PdxT/SNO"/>
</dbReference>
<dbReference type="InterPro" id="IPR021196">
    <property type="entry name" value="PdxT/SNO_CS"/>
</dbReference>
<dbReference type="NCBIfam" id="TIGR03800">
    <property type="entry name" value="PLP_synth_Pdx2"/>
    <property type="match status" value="1"/>
</dbReference>
<dbReference type="PANTHER" id="PTHR31559">
    <property type="entry name" value="PYRIDOXAL 5'-PHOSPHATE SYNTHASE SUBUNIT SNO"/>
    <property type="match status" value="1"/>
</dbReference>
<dbReference type="PANTHER" id="PTHR31559:SF0">
    <property type="entry name" value="PYRIDOXAL 5'-PHOSPHATE SYNTHASE SUBUNIT SNO1-RELATED"/>
    <property type="match status" value="1"/>
</dbReference>
<dbReference type="Pfam" id="PF01174">
    <property type="entry name" value="SNO"/>
    <property type="match status" value="1"/>
</dbReference>
<dbReference type="PIRSF" id="PIRSF005639">
    <property type="entry name" value="Glut_amidoT_SNO"/>
    <property type="match status" value="1"/>
</dbReference>
<dbReference type="SUPFAM" id="SSF52317">
    <property type="entry name" value="Class I glutamine amidotransferase-like"/>
    <property type="match status" value="1"/>
</dbReference>
<dbReference type="PROSITE" id="PS01236">
    <property type="entry name" value="PDXT_SNO_1"/>
    <property type="match status" value="1"/>
</dbReference>
<dbReference type="PROSITE" id="PS51130">
    <property type="entry name" value="PDXT_SNO_2"/>
    <property type="match status" value="1"/>
</dbReference>
<accession>B7JJC7</accession>
<protein>
    <recommendedName>
        <fullName evidence="1">Pyridoxal 5'-phosphate synthase subunit PdxT</fullName>
        <ecNumber evidence="1">4.3.3.6</ecNumber>
    </recommendedName>
    <alternativeName>
        <fullName evidence="1">Pdx2</fullName>
    </alternativeName>
    <alternativeName>
        <fullName evidence="1">Pyridoxal 5'-phosphate synthase glutaminase subunit</fullName>
        <ecNumber evidence="1">3.5.1.2</ecNumber>
    </alternativeName>
</protein>
<reference key="1">
    <citation type="submission" date="2008-10" db="EMBL/GenBank/DDBJ databases">
        <title>Genome sequence of Bacillus cereus AH820.</title>
        <authorList>
            <person name="Dodson R.J."/>
            <person name="Durkin A.S."/>
            <person name="Rosovitz M.J."/>
            <person name="Rasko D.A."/>
            <person name="Hoffmaster A."/>
            <person name="Ravel J."/>
            <person name="Sutton G."/>
        </authorList>
    </citation>
    <scope>NUCLEOTIDE SEQUENCE [LARGE SCALE GENOMIC DNA]</scope>
    <source>
        <strain>AH820</strain>
    </source>
</reference>
<feature type="chain" id="PRO_1000185872" description="Pyridoxal 5'-phosphate synthase subunit PdxT">
    <location>
        <begin position="1"/>
        <end position="196"/>
    </location>
</feature>
<feature type="active site" description="Nucleophile" evidence="1">
    <location>
        <position position="79"/>
    </location>
</feature>
<feature type="active site" description="Charge relay system" evidence="1">
    <location>
        <position position="170"/>
    </location>
</feature>
<feature type="active site" description="Charge relay system" evidence="1">
    <location>
        <position position="172"/>
    </location>
</feature>
<feature type="binding site" evidence="1">
    <location>
        <begin position="47"/>
        <end position="49"/>
    </location>
    <ligand>
        <name>L-glutamine</name>
        <dbReference type="ChEBI" id="CHEBI:58359"/>
    </ligand>
</feature>
<feature type="binding site" evidence="1">
    <location>
        <position position="106"/>
    </location>
    <ligand>
        <name>L-glutamine</name>
        <dbReference type="ChEBI" id="CHEBI:58359"/>
    </ligand>
</feature>
<feature type="binding site" evidence="1">
    <location>
        <begin position="134"/>
        <end position="135"/>
    </location>
    <ligand>
        <name>L-glutamine</name>
        <dbReference type="ChEBI" id="CHEBI:58359"/>
    </ligand>
</feature>
<keyword id="KW-0315">Glutamine amidotransferase</keyword>
<keyword id="KW-0378">Hydrolase</keyword>
<keyword id="KW-0456">Lyase</keyword>
<keyword id="KW-0663">Pyridoxal phosphate</keyword>
<name>PDXT_BACC0</name>
<gene>
    <name evidence="1" type="primary">pdxT</name>
    <name type="ordered locus">BCAH820_0015</name>
</gene>
<proteinExistence type="inferred from homology"/>
<comment type="function">
    <text evidence="1">Catalyzes the hydrolysis of glutamine to glutamate and ammonia as part of the biosynthesis of pyridoxal 5'-phosphate. The resulting ammonia molecule is channeled to the active site of PdxS.</text>
</comment>
<comment type="catalytic activity">
    <reaction evidence="1">
        <text>aldehydo-D-ribose 5-phosphate + D-glyceraldehyde 3-phosphate + L-glutamine = pyridoxal 5'-phosphate + L-glutamate + phosphate + 3 H2O + H(+)</text>
        <dbReference type="Rhea" id="RHEA:31507"/>
        <dbReference type="ChEBI" id="CHEBI:15377"/>
        <dbReference type="ChEBI" id="CHEBI:15378"/>
        <dbReference type="ChEBI" id="CHEBI:29985"/>
        <dbReference type="ChEBI" id="CHEBI:43474"/>
        <dbReference type="ChEBI" id="CHEBI:58273"/>
        <dbReference type="ChEBI" id="CHEBI:58359"/>
        <dbReference type="ChEBI" id="CHEBI:59776"/>
        <dbReference type="ChEBI" id="CHEBI:597326"/>
        <dbReference type="EC" id="4.3.3.6"/>
    </reaction>
</comment>
<comment type="catalytic activity">
    <reaction evidence="1">
        <text>L-glutamine + H2O = L-glutamate + NH4(+)</text>
        <dbReference type="Rhea" id="RHEA:15889"/>
        <dbReference type="ChEBI" id="CHEBI:15377"/>
        <dbReference type="ChEBI" id="CHEBI:28938"/>
        <dbReference type="ChEBI" id="CHEBI:29985"/>
        <dbReference type="ChEBI" id="CHEBI:58359"/>
        <dbReference type="EC" id="3.5.1.2"/>
    </reaction>
</comment>
<comment type="pathway">
    <text evidence="1">Cofactor biosynthesis; pyridoxal 5'-phosphate biosynthesis.</text>
</comment>
<comment type="subunit">
    <text evidence="1">In the presence of PdxS, forms a dodecamer of heterodimers. Only shows activity in the heterodimer.</text>
</comment>
<comment type="similarity">
    <text evidence="1">Belongs to the glutaminase PdxT/SNO family.</text>
</comment>
<organism>
    <name type="scientific">Bacillus cereus (strain AH820)</name>
    <dbReference type="NCBI Taxonomy" id="405535"/>
    <lineage>
        <taxon>Bacteria</taxon>
        <taxon>Bacillati</taxon>
        <taxon>Bacillota</taxon>
        <taxon>Bacilli</taxon>
        <taxon>Bacillales</taxon>
        <taxon>Bacillaceae</taxon>
        <taxon>Bacillus</taxon>
        <taxon>Bacillus cereus group</taxon>
    </lineage>
</organism>
<sequence length="196" mass="21460">MVKIGVLGLQGAVREHVKSVEASGAEAVVVKRIEQLEEIDGLILPGGESTTMRRLIDKYDFMEPLRTFAKSGKPMFGTCAGMILLAKTLIGYDEAHIGAMDITVERNAFGRQKDSFEAALSIKGVGEDFVGVFIRAPYVVDVADDVEVLSTHGDRMVAVRQGPFLAASFHPELTDDHRVTAYFVEMVKEAKMKKVV</sequence>
<evidence type="ECO:0000255" key="1">
    <source>
        <dbReference type="HAMAP-Rule" id="MF_01615"/>
    </source>
</evidence>